<proteinExistence type="inferred from homology"/>
<dbReference type="EMBL" id="U94848">
    <property type="protein sequence ID" value="AAB96402.1"/>
    <property type="molecule type" value="Genomic_DNA"/>
</dbReference>
<dbReference type="EMBL" id="AY603355">
    <property type="protein sequence ID" value="AAT10403.1"/>
    <property type="molecule type" value="Genomic_DNA"/>
</dbReference>
<dbReference type="PIR" id="T30767">
    <property type="entry name" value="T30767"/>
</dbReference>
<dbReference type="SMR" id="O57167"/>
<dbReference type="Proteomes" id="UP000159908">
    <property type="component" value="Segment"/>
</dbReference>
<dbReference type="Proteomes" id="UP000172909">
    <property type="component" value="Segment"/>
</dbReference>
<dbReference type="InterPro" id="IPR005004">
    <property type="entry name" value="Poxvirus_C4/C10"/>
</dbReference>
<dbReference type="Pfam" id="PF03336">
    <property type="entry name" value="Pox_C4_C10"/>
    <property type="match status" value="1"/>
</dbReference>
<dbReference type="PIRSF" id="PIRSF003698">
    <property type="entry name" value="VAC_C10L"/>
    <property type="match status" value="1"/>
</dbReference>
<comment type="similarity">
    <text evidence="1">Belongs to the poxviridae C4/C10 protein family.</text>
</comment>
<organismHost>
    <name type="scientific">Homo sapiens</name>
    <name type="common">Human</name>
    <dbReference type="NCBI Taxonomy" id="9606"/>
</organismHost>
<gene>
    <name type="ordered locus">MVA006L</name>
    <name type="ordered locus">ACAM3000_MVA_006</name>
</gene>
<reference key="1">
    <citation type="journal article" date="1998" name="Virology">
        <title>The complete genomic sequence of the modified vaccinia Ankara strain: comparison with other orthopoxviruses.</title>
        <authorList>
            <person name="Antoine G."/>
            <person name="Scheiflinger F."/>
            <person name="Dorner F."/>
            <person name="Falkner F.G."/>
        </authorList>
    </citation>
    <scope>NUCLEOTIDE SEQUENCE [LARGE SCALE GENOMIC DNA]</scope>
</reference>
<reference key="2">
    <citation type="submission" date="2004-04" db="EMBL/GenBank/DDBJ databases">
        <authorList>
            <person name="Esposito J.J."/>
            <person name="Frace M."/>
            <person name="Sammons S.A."/>
            <person name="Olsen-Rasmussen M.S."/>
            <person name="Osborne J."/>
            <person name="Khristova M."/>
            <person name="Wohlhueter R.M."/>
        </authorList>
    </citation>
    <scope>NUCLEOTIDE SEQUENCE [LARGE SCALE GENOMIC DNA]</scope>
    <source>
        <strain>Isolate Acambis 3000</strain>
    </source>
</reference>
<protein>
    <recommendedName>
        <fullName>Protein C10</fullName>
    </recommendedName>
</protein>
<evidence type="ECO:0000305" key="1"/>
<organism>
    <name type="scientific">Vaccinia virus (strain Ankara)</name>
    <name type="common">VACV</name>
    <dbReference type="NCBI Taxonomy" id="126794"/>
    <lineage>
        <taxon>Viruses</taxon>
        <taxon>Varidnaviria</taxon>
        <taxon>Bamfordvirae</taxon>
        <taxon>Nucleocytoviricota</taxon>
        <taxon>Pokkesviricetes</taxon>
        <taxon>Chitovirales</taxon>
        <taxon>Poxviridae</taxon>
        <taxon>Chordopoxvirinae</taxon>
        <taxon>Orthopoxvirus</taxon>
        <taxon>Vaccinia virus</taxon>
    </lineage>
</organism>
<accession>O57167</accession>
<feature type="chain" id="PRO_0000099408" description="Protein C10">
    <location>
        <begin position="1"/>
        <end position="326"/>
    </location>
</feature>
<sequence>MDIYDDKGLQTIKLFNNEFDCIRNDIRELFKHVTDSDSIQLPMEDNSDIIENIRKILYRRLKNVECVDIDSTITFMKYDPNDDNKRTCSNWVPLTNNYMEYCLVIYLETPICGGKIKLYHPTGNIKSDKDIMFAKTLDFKSTKVLTGRKTIAVLDISVSYNRSMTTIHYNDDVDIDIHTDKNGKELCYCYITIDDHYLVDVETIGVIVNRSGKCLLVNNHLGIGIVKDKRISDSFGDVCMDTIFDFSEARELFSLTNDDNRNIAWDDDTDIWTPVTEDDYKFLSRLVLYAKSQSDTVFDYYVLTGDTEPPTVFIFKVTRFYFNMPK</sequence>
<name>C10_VACCA</name>